<proteinExistence type="inferred from homology"/>
<protein>
    <recommendedName>
        <fullName evidence="1">GTP 3',8-cyclase</fullName>
        <ecNumber evidence="1">4.1.99.22</ecNumber>
    </recommendedName>
    <alternativeName>
        <fullName evidence="1">Molybdenum cofactor biosynthesis protein A</fullName>
    </alternativeName>
</protein>
<feature type="chain" id="PRO_1000054179" description="GTP 3',8-cyclase">
    <location>
        <begin position="1"/>
        <end position="322"/>
    </location>
</feature>
<feature type="domain" description="Radical SAM core" evidence="2">
    <location>
        <begin position="5"/>
        <end position="233"/>
    </location>
</feature>
<feature type="binding site" evidence="1">
    <location>
        <position position="14"/>
    </location>
    <ligand>
        <name>GTP</name>
        <dbReference type="ChEBI" id="CHEBI:37565"/>
    </ligand>
</feature>
<feature type="binding site" evidence="1">
    <location>
        <position position="21"/>
    </location>
    <ligand>
        <name>[4Fe-4S] cluster</name>
        <dbReference type="ChEBI" id="CHEBI:49883"/>
        <label>1</label>
        <note>4Fe-4S-S-AdoMet</note>
    </ligand>
</feature>
<feature type="binding site" evidence="1">
    <location>
        <position position="25"/>
    </location>
    <ligand>
        <name>[4Fe-4S] cluster</name>
        <dbReference type="ChEBI" id="CHEBI:49883"/>
        <label>1</label>
        <note>4Fe-4S-S-AdoMet</note>
    </ligand>
</feature>
<feature type="binding site" evidence="1">
    <location>
        <position position="27"/>
    </location>
    <ligand>
        <name>S-adenosyl-L-methionine</name>
        <dbReference type="ChEBI" id="CHEBI:59789"/>
    </ligand>
</feature>
<feature type="binding site" evidence="1">
    <location>
        <position position="28"/>
    </location>
    <ligand>
        <name>[4Fe-4S] cluster</name>
        <dbReference type="ChEBI" id="CHEBI:49883"/>
        <label>1</label>
        <note>4Fe-4S-S-AdoMet</note>
    </ligand>
</feature>
<feature type="binding site" evidence="1">
    <location>
        <position position="64"/>
    </location>
    <ligand>
        <name>GTP</name>
        <dbReference type="ChEBI" id="CHEBI:37565"/>
    </ligand>
</feature>
<feature type="binding site" evidence="1">
    <location>
        <position position="68"/>
    </location>
    <ligand>
        <name>S-adenosyl-L-methionine</name>
        <dbReference type="ChEBI" id="CHEBI:59789"/>
    </ligand>
</feature>
<feature type="binding site" evidence="1">
    <location>
        <position position="95"/>
    </location>
    <ligand>
        <name>GTP</name>
        <dbReference type="ChEBI" id="CHEBI:37565"/>
    </ligand>
</feature>
<feature type="binding site" evidence="1">
    <location>
        <position position="119"/>
    </location>
    <ligand>
        <name>S-adenosyl-L-methionine</name>
        <dbReference type="ChEBI" id="CHEBI:59789"/>
    </ligand>
</feature>
<feature type="binding site" evidence="1">
    <location>
        <position position="155"/>
    </location>
    <ligand>
        <name>GTP</name>
        <dbReference type="ChEBI" id="CHEBI:37565"/>
    </ligand>
</feature>
<feature type="binding site" evidence="1">
    <location>
        <position position="189"/>
    </location>
    <ligand>
        <name>S-adenosyl-L-methionine</name>
        <dbReference type="ChEBI" id="CHEBI:59789"/>
    </ligand>
</feature>
<feature type="binding site" evidence="1">
    <location>
        <position position="249"/>
    </location>
    <ligand>
        <name>[4Fe-4S] cluster</name>
        <dbReference type="ChEBI" id="CHEBI:49883"/>
        <label>2</label>
        <note>4Fe-4S-substrate</note>
    </ligand>
</feature>
<feature type="binding site" evidence="1">
    <location>
        <position position="252"/>
    </location>
    <ligand>
        <name>[4Fe-4S] cluster</name>
        <dbReference type="ChEBI" id="CHEBI:49883"/>
        <label>2</label>
        <note>4Fe-4S-substrate</note>
    </ligand>
</feature>
<feature type="binding site" evidence="1">
    <location>
        <begin position="254"/>
        <end position="256"/>
    </location>
    <ligand>
        <name>GTP</name>
        <dbReference type="ChEBI" id="CHEBI:37565"/>
    </ligand>
</feature>
<feature type="binding site" evidence="1">
    <location>
        <position position="266"/>
    </location>
    <ligand>
        <name>[4Fe-4S] cluster</name>
        <dbReference type="ChEBI" id="CHEBI:49883"/>
        <label>2</label>
        <note>4Fe-4S-substrate</note>
    </ligand>
</feature>
<organism>
    <name type="scientific">Campylobacter curvus (strain 525.92)</name>
    <dbReference type="NCBI Taxonomy" id="360105"/>
    <lineage>
        <taxon>Bacteria</taxon>
        <taxon>Pseudomonadati</taxon>
        <taxon>Campylobacterota</taxon>
        <taxon>Epsilonproteobacteria</taxon>
        <taxon>Campylobacterales</taxon>
        <taxon>Campylobacteraceae</taxon>
        <taxon>Campylobacter</taxon>
    </lineage>
</organism>
<name>MOAA_CAMC5</name>
<reference key="1">
    <citation type="submission" date="2007-07" db="EMBL/GenBank/DDBJ databases">
        <title>Genome sequence of Campylobacter curvus 525.92 isolated from human feces.</title>
        <authorList>
            <person name="Fouts D.E."/>
            <person name="Mongodin E.F."/>
            <person name="Puiu D."/>
            <person name="Sebastian Y."/>
            <person name="Miller W.G."/>
            <person name="Mandrell R.E."/>
            <person name="Lastovica A.J."/>
            <person name="Nelson K.E."/>
        </authorList>
    </citation>
    <scope>NUCLEOTIDE SEQUENCE [LARGE SCALE GENOMIC DNA]</scope>
    <source>
        <strain>525.92</strain>
    </source>
</reference>
<comment type="function">
    <text evidence="1">Catalyzes the cyclization of GTP to (8S)-3',8-cyclo-7,8-dihydroguanosine 5'-triphosphate.</text>
</comment>
<comment type="catalytic activity">
    <reaction evidence="1">
        <text>GTP + AH2 + S-adenosyl-L-methionine = (8S)-3',8-cyclo-7,8-dihydroguanosine 5'-triphosphate + 5'-deoxyadenosine + L-methionine + A + H(+)</text>
        <dbReference type="Rhea" id="RHEA:49576"/>
        <dbReference type="ChEBI" id="CHEBI:13193"/>
        <dbReference type="ChEBI" id="CHEBI:15378"/>
        <dbReference type="ChEBI" id="CHEBI:17319"/>
        <dbReference type="ChEBI" id="CHEBI:17499"/>
        <dbReference type="ChEBI" id="CHEBI:37565"/>
        <dbReference type="ChEBI" id="CHEBI:57844"/>
        <dbReference type="ChEBI" id="CHEBI:59789"/>
        <dbReference type="ChEBI" id="CHEBI:131766"/>
        <dbReference type="EC" id="4.1.99.22"/>
    </reaction>
</comment>
<comment type="cofactor">
    <cofactor evidence="1">
        <name>[4Fe-4S] cluster</name>
        <dbReference type="ChEBI" id="CHEBI:49883"/>
    </cofactor>
    <text evidence="1">Binds 2 [4Fe-4S] clusters. Binds 1 [4Fe-4S] cluster coordinated with 3 cysteines and an exchangeable S-adenosyl-L-methionine and 1 [4Fe-4S] cluster coordinated with 3 cysteines and the GTP-derived substrate.</text>
</comment>
<comment type="pathway">
    <text evidence="1">Cofactor biosynthesis; molybdopterin biosynthesis.</text>
</comment>
<comment type="subunit">
    <text evidence="1">Monomer and homodimer.</text>
</comment>
<comment type="similarity">
    <text evidence="1">Belongs to the radical SAM superfamily. MoaA family.</text>
</comment>
<evidence type="ECO:0000255" key="1">
    <source>
        <dbReference type="HAMAP-Rule" id="MF_01225"/>
    </source>
</evidence>
<evidence type="ECO:0000255" key="2">
    <source>
        <dbReference type="PROSITE-ProRule" id="PRU01266"/>
    </source>
</evidence>
<dbReference type="EC" id="4.1.99.22" evidence="1"/>
<dbReference type="EMBL" id="CP000767">
    <property type="protein sequence ID" value="EAU01133.1"/>
    <property type="molecule type" value="Genomic_DNA"/>
</dbReference>
<dbReference type="RefSeq" id="WP_011991755.1">
    <property type="nucleotide sequence ID" value="NC_009715.2"/>
</dbReference>
<dbReference type="SMR" id="A7GWA5"/>
<dbReference type="STRING" id="360105.CCV52592_0822"/>
<dbReference type="KEGG" id="ccv:CCV52592_0822"/>
<dbReference type="HOGENOM" id="CLU_009273_0_1_7"/>
<dbReference type="OrthoDB" id="9763993at2"/>
<dbReference type="UniPathway" id="UPA00344"/>
<dbReference type="Proteomes" id="UP000006380">
    <property type="component" value="Chromosome"/>
</dbReference>
<dbReference type="GO" id="GO:0051539">
    <property type="term" value="F:4 iron, 4 sulfur cluster binding"/>
    <property type="evidence" value="ECO:0007669"/>
    <property type="project" value="UniProtKB-UniRule"/>
</dbReference>
<dbReference type="GO" id="GO:0061799">
    <property type="term" value="F:cyclic pyranopterin monophosphate synthase activity"/>
    <property type="evidence" value="ECO:0007669"/>
    <property type="project" value="TreeGrafter"/>
</dbReference>
<dbReference type="GO" id="GO:0061798">
    <property type="term" value="F:GTP 3',8'-cyclase activity"/>
    <property type="evidence" value="ECO:0007669"/>
    <property type="project" value="UniProtKB-UniRule"/>
</dbReference>
<dbReference type="GO" id="GO:0005525">
    <property type="term" value="F:GTP binding"/>
    <property type="evidence" value="ECO:0007669"/>
    <property type="project" value="UniProtKB-UniRule"/>
</dbReference>
<dbReference type="GO" id="GO:0046872">
    <property type="term" value="F:metal ion binding"/>
    <property type="evidence" value="ECO:0007669"/>
    <property type="project" value="UniProtKB-KW"/>
</dbReference>
<dbReference type="GO" id="GO:1904047">
    <property type="term" value="F:S-adenosyl-L-methionine binding"/>
    <property type="evidence" value="ECO:0007669"/>
    <property type="project" value="UniProtKB-UniRule"/>
</dbReference>
<dbReference type="GO" id="GO:0006777">
    <property type="term" value="P:Mo-molybdopterin cofactor biosynthetic process"/>
    <property type="evidence" value="ECO:0007669"/>
    <property type="project" value="UniProtKB-UniRule"/>
</dbReference>
<dbReference type="CDD" id="cd01335">
    <property type="entry name" value="Radical_SAM"/>
    <property type="match status" value="1"/>
</dbReference>
<dbReference type="CDD" id="cd21117">
    <property type="entry name" value="Twitch_MoaA"/>
    <property type="match status" value="1"/>
</dbReference>
<dbReference type="Gene3D" id="3.20.20.70">
    <property type="entry name" value="Aldolase class I"/>
    <property type="match status" value="1"/>
</dbReference>
<dbReference type="HAMAP" id="MF_01225_B">
    <property type="entry name" value="MoaA_B"/>
    <property type="match status" value="1"/>
</dbReference>
<dbReference type="InterPro" id="IPR013785">
    <property type="entry name" value="Aldolase_TIM"/>
</dbReference>
<dbReference type="InterPro" id="IPR006638">
    <property type="entry name" value="Elp3/MiaA/NifB-like_rSAM"/>
</dbReference>
<dbReference type="InterPro" id="IPR013483">
    <property type="entry name" value="MoaA"/>
</dbReference>
<dbReference type="InterPro" id="IPR000385">
    <property type="entry name" value="MoaA_NifB_PqqE_Fe-S-bd_CS"/>
</dbReference>
<dbReference type="InterPro" id="IPR010505">
    <property type="entry name" value="MoaA_twitch"/>
</dbReference>
<dbReference type="InterPro" id="IPR050105">
    <property type="entry name" value="MoCo_biosynth_MoaA/MoaC"/>
</dbReference>
<dbReference type="InterPro" id="IPR007197">
    <property type="entry name" value="rSAM"/>
</dbReference>
<dbReference type="NCBIfam" id="TIGR02666">
    <property type="entry name" value="moaA"/>
    <property type="match status" value="1"/>
</dbReference>
<dbReference type="PANTHER" id="PTHR22960:SF0">
    <property type="entry name" value="MOLYBDENUM COFACTOR BIOSYNTHESIS PROTEIN 1"/>
    <property type="match status" value="1"/>
</dbReference>
<dbReference type="PANTHER" id="PTHR22960">
    <property type="entry name" value="MOLYBDOPTERIN COFACTOR SYNTHESIS PROTEIN A"/>
    <property type="match status" value="1"/>
</dbReference>
<dbReference type="Pfam" id="PF13353">
    <property type="entry name" value="Fer4_12"/>
    <property type="match status" value="1"/>
</dbReference>
<dbReference type="Pfam" id="PF06463">
    <property type="entry name" value="Mob_synth_C"/>
    <property type="match status" value="1"/>
</dbReference>
<dbReference type="Pfam" id="PF04055">
    <property type="entry name" value="Radical_SAM"/>
    <property type="match status" value="1"/>
</dbReference>
<dbReference type="SFLD" id="SFLDG01383">
    <property type="entry name" value="cyclic_pyranopterin_phosphate"/>
    <property type="match status" value="1"/>
</dbReference>
<dbReference type="SFLD" id="SFLDG01216">
    <property type="entry name" value="thioether_bond_formation_requi"/>
    <property type="match status" value="1"/>
</dbReference>
<dbReference type="SMART" id="SM00729">
    <property type="entry name" value="Elp3"/>
    <property type="match status" value="1"/>
</dbReference>
<dbReference type="SUPFAM" id="SSF102114">
    <property type="entry name" value="Radical SAM enzymes"/>
    <property type="match status" value="1"/>
</dbReference>
<dbReference type="PROSITE" id="PS01305">
    <property type="entry name" value="MOAA_NIFB_PQQE"/>
    <property type="match status" value="1"/>
</dbReference>
<dbReference type="PROSITE" id="PS51918">
    <property type="entry name" value="RADICAL_SAM"/>
    <property type="match status" value="1"/>
</dbReference>
<keyword id="KW-0004">4Fe-4S</keyword>
<keyword id="KW-0342">GTP-binding</keyword>
<keyword id="KW-0408">Iron</keyword>
<keyword id="KW-0411">Iron-sulfur</keyword>
<keyword id="KW-0456">Lyase</keyword>
<keyword id="KW-0479">Metal-binding</keyword>
<keyword id="KW-0501">Molybdenum cofactor biosynthesis</keyword>
<keyword id="KW-0547">Nucleotide-binding</keyword>
<keyword id="KW-1185">Reference proteome</keyword>
<keyword id="KW-0949">S-adenosyl-L-methionine</keyword>
<sequence>MLVDKYGRVVDYLRISVTQRCNFRCRYCMPTTPFSWTPKENLLSFEELFLFVKVAIDEGVTKIRLTGGEPLVRKDLDVFVKMISDYKPDIDLALTTNGFMLRHYAKRLRDAGLKRINMSLDTLNEQKAKFIAQKSVLHEVLTGFEAALDAGLKVKINTVALKGVNDDELINLLEFARFRNSQIRFIEYMENSHAKDDLKGLKSDEILDIISQKYNVTKDEKLPNAPASIYRLDDGYKFGIIDPHKHDFCESCNRIRLSAEGLLIPCLYFEDALSIKDAVSRGDIIGASEILRQVLANKPKENKWAVGAANETSSRAFYQTGG</sequence>
<gene>
    <name evidence="1" type="primary">moaA</name>
    <name type="ordered locus">Ccur92_01930</name>
    <name type="ORF">CCV52592_0822</name>
</gene>
<accession>A7GWA5</accession>